<sequence>MGSYSFPKTERLLKRADFLKLSRSGRTKQTRYFIAAMLGSETDTTRLGITVSKRVGNAVERNRIKRIVRDYYRLNRDTISGNRDINIIARKYVASLNNREVRDELGKLFKKIVRSDG</sequence>
<accession>C0QIZ3</accession>
<evidence type="ECO:0000255" key="1">
    <source>
        <dbReference type="HAMAP-Rule" id="MF_00227"/>
    </source>
</evidence>
<name>RNPA_DESAH</name>
<dbReference type="EC" id="3.1.26.5" evidence="1"/>
<dbReference type="EMBL" id="CP001087">
    <property type="protein sequence ID" value="ACN13783.1"/>
    <property type="molecule type" value="Genomic_DNA"/>
</dbReference>
<dbReference type="RefSeq" id="WP_012663031.1">
    <property type="nucleotide sequence ID" value="NC_012108.1"/>
</dbReference>
<dbReference type="SMR" id="C0QIZ3"/>
<dbReference type="STRING" id="177437.HRM2_06690"/>
<dbReference type="KEGG" id="dat:HRM2_06690"/>
<dbReference type="eggNOG" id="COG0594">
    <property type="taxonomic scope" value="Bacteria"/>
</dbReference>
<dbReference type="HOGENOM" id="CLU_117179_9_1_7"/>
<dbReference type="OrthoDB" id="9810867at2"/>
<dbReference type="Proteomes" id="UP000000442">
    <property type="component" value="Chromosome"/>
</dbReference>
<dbReference type="GO" id="GO:0030677">
    <property type="term" value="C:ribonuclease P complex"/>
    <property type="evidence" value="ECO:0007669"/>
    <property type="project" value="TreeGrafter"/>
</dbReference>
<dbReference type="GO" id="GO:0042781">
    <property type="term" value="F:3'-tRNA processing endoribonuclease activity"/>
    <property type="evidence" value="ECO:0007669"/>
    <property type="project" value="TreeGrafter"/>
</dbReference>
<dbReference type="GO" id="GO:0004526">
    <property type="term" value="F:ribonuclease P activity"/>
    <property type="evidence" value="ECO:0007669"/>
    <property type="project" value="UniProtKB-UniRule"/>
</dbReference>
<dbReference type="GO" id="GO:0000049">
    <property type="term" value="F:tRNA binding"/>
    <property type="evidence" value="ECO:0007669"/>
    <property type="project" value="UniProtKB-UniRule"/>
</dbReference>
<dbReference type="GO" id="GO:0001682">
    <property type="term" value="P:tRNA 5'-leader removal"/>
    <property type="evidence" value="ECO:0007669"/>
    <property type="project" value="UniProtKB-UniRule"/>
</dbReference>
<dbReference type="Gene3D" id="3.30.230.10">
    <property type="match status" value="1"/>
</dbReference>
<dbReference type="HAMAP" id="MF_00227">
    <property type="entry name" value="RNase_P"/>
    <property type="match status" value="1"/>
</dbReference>
<dbReference type="InterPro" id="IPR020568">
    <property type="entry name" value="Ribosomal_Su5_D2-typ_SF"/>
</dbReference>
<dbReference type="InterPro" id="IPR014721">
    <property type="entry name" value="Ribsml_uS5_D2-typ_fold_subgr"/>
</dbReference>
<dbReference type="InterPro" id="IPR000100">
    <property type="entry name" value="RNase_P"/>
</dbReference>
<dbReference type="InterPro" id="IPR020539">
    <property type="entry name" value="RNase_P_CS"/>
</dbReference>
<dbReference type="NCBIfam" id="TIGR00188">
    <property type="entry name" value="rnpA"/>
    <property type="match status" value="1"/>
</dbReference>
<dbReference type="PANTHER" id="PTHR33992">
    <property type="entry name" value="RIBONUCLEASE P PROTEIN COMPONENT"/>
    <property type="match status" value="1"/>
</dbReference>
<dbReference type="PANTHER" id="PTHR33992:SF1">
    <property type="entry name" value="RIBONUCLEASE P PROTEIN COMPONENT"/>
    <property type="match status" value="1"/>
</dbReference>
<dbReference type="Pfam" id="PF00825">
    <property type="entry name" value="Ribonuclease_P"/>
    <property type="match status" value="1"/>
</dbReference>
<dbReference type="SUPFAM" id="SSF54211">
    <property type="entry name" value="Ribosomal protein S5 domain 2-like"/>
    <property type="match status" value="1"/>
</dbReference>
<dbReference type="PROSITE" id="PS00648">
    <property type="entry name" value="RIBONUCLEASE_P"/>
    <property type="match status" value="1"/>
</dbReference>
<feature type="chain" id="PRO_1000204343" description="Ribonuclease P protein component">
    <location>
        <begin position="1"/>
        <end position="117"/>
    </location>
</feature>
<proteinExistence type="inferred from homology"/>
<protein>
    <recommendedName>
        <fullName evidence="1">Ribonuclease P protein component</fullName>
        <shortName evidence="1">RNase P protein</shortName>
        <shortName evidence="1">RNaseP protein</shortName>
        <ecNumber evidence="1">3.1.26.5</ecNumber>
    </recommendedName>
    <alternativeName>
        <fullName evidence="1">Protein C5</fullName>
    </alternativeName>
</protein>
<organism>
    <name type="scientific">Desulforapulum autotrophicum (strain ATCC 43914 / DSM 3382 / VKM B-1955 / HRM2)</name>
    <name type="common">Desulfobacterium autotrophicum</name>
    <dbReference type="NCBI Taxonomy" id="177437"/>
    <lineage>
        <taxon>Bacteria</taxon>
        <taxon>Pseudomonadati</taxon>
        <taxon>Thermodesulfobacteriota</taxon>
        <taxon>Desulfobacteria</taxon>
        <taxon>Desulfobacterales</taxon>
        <taxon>Desulfobacteraceae</taxon>
        <taxon>Desulforapulum</taxon>
    </lineage>
</organism>
<reference key="1">
    <citation type="journal article" date="2009" name="Environ. Microbiol.">
        <title>Genome sequence of Desulfobacterium autotrophicum HRM2, a marine sulfate reducer oxidizing organic carbon completely to carbon dioxide.</title>
        <authorList>
            <person name="Strittmatter A.W."/>
            <person name="Liesegang H."/>
            <person name="Rabus R."/>
            <person name="Decker I."/>
            <person name="Amann J."/>
            <person name="Andres S."/>
            <person name="Henne A."/>
            <person name="Fricke W.F."/>
            <person name="Martinez-Arias R."/>
            <person name="Bartels D."/>
            <person name="Goesmann A."/>
            <person name="Krause L."/>
            <person name="Puehler A."/>
            <person name="Klenk H.P."/>
            <person name="Richter M."/>
            <person name="Schuler M."/>
            <person name="Gloeckner F.O."/>
            <person name="Meyerdierks A."/>
            <person name="Gottschalk G."/>
            <person name="Amann R."/>
        </authorList>
    </citation>
    <scope>NUCLEOTIDE SEQUENCE [LARGE SCALE GENOMIC DNA]</scope>
    <source>
        <strain>ATCC 43914 / DSM 3382 / VKM B-1955 / HRM2</strain>
    </source>
</reference>
<comment type="function">
    <text evidence="1">RNaseP catalyzes the removal of the 5'-leader sequence from pre-tRNA to produce the mature 5'-terminus. It can also cleave other RNA substrates such as 4.5S RNA. The protein component plays an auxiliary but essential role in vivo by binding to the 5'-leader sequence and broadening the substrate specificity of the ribozyme.</text>
</comment>
<comment type="catalytic activity">
    <reaction evidence="1">
        <text>Endonucleolytic cleavage of RNA, removing 5'-extranucleotides from tRNA precursor.</text>
        <dbReference type="EC" id="3.1.26.5"/>
    </reaction>
</comment>
<comment type="subunit">
    <text evidence="1">Consists of a catalytic RNA component (M1 or rnpB) and a protein subunit.</text>
</comment>
<comment type="similarity">
    <text evidence="1">Belongs to the RnpA family.</text>
</comment>
<gene>
    <name evidence="1" type="primary">rnpA</name>
    <name type="ordered locus">HRM2_06690</name>
</gene>
<keyword id="KW-0255">Endonuclease</keyword>
<keyword id="KW-0378">Hydrolase</keyword>
<keyword id="KW-0540">Nuclease</keyword>
<keyword id="KW-1185">Reference proteome</keyword>
<keyword id="KW-0694">RNA-binding</keyword>
<keyword id="KW-0819">tRNA processing</keyword>